<gene>
    <name evidence="1" type="primary">rnfA</name>
    <name type="ordered locus">Tola_1449</name>
</gene>
<organism>
    <name type="scientific">Tolumonas auensis (strain DSM 9187 / NBRC 110442 / TA 4)</name>
    <dbReference type="NCBI Taxonomy" id="595494"/>
    <lineage>
        <taxon>Bacteria</taxon>
        <taxon>Pseudomonadati</taxon>
        <taxon>Pseudomonadota</taxon>
        <taxon>Gammaproteobacteria</taxon>
        <taxon>Aeromonadales</taxon>
        <taxon>Aeromonadaceae</taxon>
        <taxon>Tolumonas</taxon>
    </lineage>
</organism>
<accession>C4LEP7</accession>
<protein>
    <recommendedName>
        <fullName evidence="1">Ion-translocating oxidoreductase complex subunit A</fullName>
        <ecNumber evidence="1">7.-.-.-</ecNumber>
    </recommendedName>
    <alternativeName>
        <fullName evidence="1">Rnf electron transport complex subunit A</fullName>
    </alternativeName>
</protein>
<sequence>MLEYLLLLISTVLVNNFVLVKFLGLCPFMGVSKKIEPAVGMGLATTFVLTLTSAFAYLVQHYLLVPLAAESLSTLAFILVIAVVVQFTEMVIHKSAPDLYRILGIYLPLITTNCIVLGLALLNITMQHNFMQSVVYGFGGGLGFMLVLILFASLRERLAAADVPAPFQGIAIGMVTAGLMSLAFLGFTGLIKL</sequence>
<dbReference type="EC" id="7.-.-.-" evidence="1"/>
<dbReference type="EMBL" id="CP001616">
    <property type="protein sequence ID" value="ACQ93064.1"/>
    <property type="molecule type" value="Genomic_DNA"/>
</dbReference>
<dbReference type="RefSeq" id="WP_015878536.1">
    <property type="nucleotide sequence ID" value="NC_012691.1"/>
</dbReference>
<dbReference type="SMR" id="C4LEP7"/>
<dbReference type="STRING" id="595494.Tola_1449"/>
<dbReference type="KEGG" id="tau:Tola_1449"/>
<dbReference type="eggNOG" id="COG4657">
    <property type="taxonomic scope" value="Bacteria"/>
</dbReference>
<dbReference type="HOGENOM" id="CLU_095255_1_0_6"/>
<dbReference type="OrthoDB" id="9803631at2"/>
<dbReference type="Proteomes" id="UP000009073">
    <property type="component" value="Chromosome"/>
</dbReference>
<dbReference type="GO" id="GO:0005886">
    <property type="term" value="C:plasma membrane"/>
    <property type="evidence" value="ECO:0007669"/>
    <property type="project" value="UniProtKB-SubCell"/>
</dbReference>
<dbReference type="GO" id="GO:0022900">
    <property type="term" value="P:electron transport chain"/>
    <property type="evidence" value="ECO:0007669"/>
    <property type="project" value="UniProtKB-UniRule"/>
</dbReference>
<dbReference type="HAMAP" id="MF_00459">
    <property type="entry name" value="RsxA_RnfA"/>
    <property type="match status" value="1"/>
</dbReference>
<dbReference type="InterPro" id="IPR011293">
    <property type="entry name" value="Ion_transpt_RnfA/RsxA"/>
</dbReference>
<dbReference type="InterPro" id="IPR003667">
    <property type="entry name" value="NqrDE/RnfAE"/>
</dbReference>
<dbReference type="InterPro" id="IPR050133">
    <property type="entry name" value="NqrDE/RnfAE_oxidrdctase"/>
</dbReference>
<dbReference type="NCBIfam" id="NF003481">
    <property type="entry name" value="PRK05151.1"/>
    <property type="match status" value="1"/>
</dbReference>
<dbReference type="NCBIfam" id="TIGR01943">
    <property type="entry name" value="rnfA"/>
    <property type="match status" value="1"/>
</dbReference>
<dbReference type="PANTHER" id="PTHR30335">
    <property type="entry name" value="INTEGRAL MEMBRANE PROTEIN OF SOXR-REDUCING COMPLEX"/>
    <property type="match status" value="1"/>
</dbReference>
<dbReference type="PANTHER" id="PTHR30335:SF0">
    <property type="entry name" value="ION-TRANSLOCATING OXIDOREDUCTASE COMPLEX SUBUNIT A"/>
    <property type="match status" value="1"/>
</dbReference>
<dbReference type="Pfam" id="PF02508">
    <property type="entry name" value="Rnf-Nqr"/>
    <property type="match status" value="1"/>
</dbReference>
<dbReference type="PIRSF" id="PIRSF006102">
    <property type="entry name" value="NQR_DE"/>
    <property type="match status" value="1"/>
</dbReference>
<feature type="chain" id="PRO_1000206287" description="Ion-translocating oxidoreductase complex subunit A">
    <location>
        <begin position="1"/>
        <end position="193"/>
    </location>
</feature>
<feature type="transmembrane region" description="Helical" evidence="1">
    <location>
        <begin position="5"/>
        <end position="25"/>
    </location>
</feature>
<feature type="transmembrane region" description="Helical" evidence="1">
    <location>
        <begin position="39"/>
        <end position="59"/>
    </location>
</feature>
<feature type="transmembrane region" description="Helical" evidence="1">
    <location>
        <begin position="72"/>
        <end position="92"/>
    </location>
</feature>
<feature type="transmembrane region" description="Helical" evidence="1">
    <location>
        <begin position="102"/>
        <end position="122"/>
    </location>
</feature>
<feature type="transmembrane region" description="Helical" evidence="1">
    <location>
        <begin position="134"/>
        <end position="154"/>
    </location>
</feature>
<feature type="transmembrane region" description="Helical" evidence="1">
    <location>
        <begin position="170"/>
        <end position="190"/>
    </location>
</feature>
<proteinExistence type="inferred from homology"/>
<comment type="function">
    <text evidence="1">Part of a membrane-bound complex that couples electron transfer with translocation of ions across the membrane.</text>
</comment>
<comment type="subunit">
    <text evidence="1">The complex is composed of six subunits: RnfA, RnfB, RnfC, RnfD, RnfE and RnfG.</text>
</comment>
<comment type="subcellular location">
    <subcellularLocation>
        <location evidence="1">Cell inner membrane</location>
        <topology evidence="1">Multi-pass membrane protein</topology>
    </subcellularLocation>
</comment>
<comment type="similarity">
    <text evidence="1">Belongs to the NqrDE/RnfAE family.</text>
</comment>
<keyword id="KW-0997">Cell inner membrane</keyword>
<keyword id="KW-1003">Cell membrane</keyword>
<keyword id="KW-0249">Electron transport</keyword>
<keyword id="KW-0472">Membrane</keyword>
<keyword id="KW-1185">Reference proteome</keyword>
<keyword id="KW-1278">Translocase</keyword>
<keyword id="KW-0812">Transmembrane</keyword>
<keyword id="KW-1133">Transmembrane helix</keyword>
<keyword id="KW-0813">Transport</keyword>
<evidence type="ECO:0000255" key="1">
    <source>
        <dbReference type="HAMAP-Rule" id="MF_00459"/>
    </source>
</evidence>
<reference key="1">
    <citation type="submission" date="2009-05" db="EMBL/GenBank/DDBJ databases">
        <title>Complete sequence of Tolumonas auensis DSM 9187.</title>
        <authorList>
            <consortium name="US DOE Joint Genome Institute"/>
            <person name="Lucas S."/>
            <person name="Copeland A."/>
            <person name="Lapidus A."/>
            <person name="Glavina del Rio T."/>
            <person name="Tice H."/>
            <person name="Bruce D."/>
            <person name="Goodwin L."/>
            <person name="Pitluck S."/>
            <person name="Chertkov O."/>
            <person name="Brettin T."/>
            <person name="Detter J.C."/>
            <person name="Han C."/>
            <person name="Larimer F."/>
            <person name="Land M."/>
            <person name="Hauser L."/>
            <person name="Kyrpides N."/>
            <person name="Mikhailova N."/>
            <person name="Spring S."/>
            <person name="Beller H."/>
        </authorList>
    </citation>
    <scope>NUCLEOTIDE SEQUENCE [LARGE SCALE GENOMIC DNA]</scope>
    <source>
        <strain>DSM 9187 / NBRC 110442 / TA 4</strain>
    </source>
</reference>
<name>RNFA_TOLAT</name>